<sequence>MKLIVKVFPEITIKSPPVRKRFIRQLAKNIRTVLRDLDPELAVTGVWDNLEVETAVEKPRLLREMIERLCCTPGIAHFLEVHEYPLGDLDDILEKCKRHYAGQLPGKIFAVRCKRAGRHPFTSMEVERYVGGCLRQQCGAAGVSLSAPEVEVRMEIRDQRLFVVHRQHDSIGGYPLGALEQTLVLMSGGFDSTVAAFQTMRRGLMTHFCFFNLGGRAHELGVMEVAHYLWQKYGSSQRVLFVSVPFEEVVGEILGKVDNSQMGVILKRMMLRAATRVAERLKIDALVTGEAISQVSSQTLPNLSVIDSATDMLVLRPLIASHKQDIIDTATRIGTAEFARHMPEYCGVISVNPTTRARRDRIDYEERQFDMAILERALERAHLVPIDRVIDELGEEICVEEVREALAGQIVLDIRHPEAVEDGPLELPGIEVRALPFYALNNRFKELDSNRQYLLYCDKGVMSRLHAHHLLSEGHANVRVYRPA</sequence>
<dbReference type="EC" id="2.8.1.4" evidence="1"/>
<dbReference type="EMBL" id="CP001157">
    <property type="protein sequence ID" value="ACO80695.1"/>
    <property type="molecule type" value="Genomic_DNA"/>
</dbReference>
<dbReference type="RefSeq" id="WP_012703059.1">
    <property type="nucleotide sequence ID" value="NC_012560.1"/>
</dbReference>
<dbReference type="SMR" id="C1DHW2"/>
<dbReference type="STRING" id="322710.Avin_45840"/>
<dbReference type="EnsemblBacteria" id="ACO80695">
    <property type="protein sequence ID" value="ACO80695"/>
    <property type="gene ID" value="Avin_45840"/>
</dbReference>
<dbReference type="GeneID" id="88187466"/>
<dbReference type="KEGG" id="avn:Avin_45840"/>
<dbReference type="eggNOG" id="COG0301">
    <property type="taxonomic scope" value="Bacteria"/>
</dbReference>
<dbReference type="eggNOG" id="COG0607">
    <property type="taxonomic scope" value="Bacteria"/>
</dbReference>
<dbReference type="HOGENOM" id="CLU_037952_4_1_6"/>
<dbReference type="OrthoDB" id="9773948at2"/>
<dbReference type="UniPathway" id="UPA00060"/>
<dbReference type="Proteomes" id="UP000002424">
    <property type="component" value="Chromosome"/>
</dbReference>
<dbReference type="GO" id="GO:0005829">
    <property type="term" value="C:cytosol"/>
    <property type="evidence" value="ECO:0007669"/>
    <property type="project" value="TreeGrafter"/>
</dbReference>
<dbReference type="GO" id="GO:0005524">
    <property type="term" value="F:ATP binding"/>
    <property type="evidence" value="ECO:0007669"/>
    <property type="project" value="UniProtKB-UniRule"/>
</dbReference>
<dbReference type="GO" id="GO:0004810">
    <property type="term" value="F:CCA tRNA nucleotidyltransferase activity"/>
    <property type="evidence" value="ECO:0007669"/>
    <property type="project" value="InterPro"/>
</dbReference>
<dbReference type="GO" id="GO:0000049">
    <property type="term" value="F:tRNA binding"/>
    <property type="evidence" value="ECO:0007669"/>
    <property type="project" value="UniProtKB-UniRule"/>
</dbReference>
<dbReference type="GO" id="GO:0140741">
    <property type="term" value="F:tRNA-uracil-4 sulfurtransferase activity"/>
    <property type="evidence" value="ECO:0007669"/>
    <property type="project" value="UniProtKB-EC"/>
</dbReference>
<dbReference type="GO" id="GO:0009228">
    <property type="term" value="P:thiamine biosynthetic process"/>
    <property type="evidence" value="ECO:0007669"/>
    <property type="project" value="UniProtKB-KW"/>
</dbReference>
<dbReference type="GO" id="GO:0009229">
    <property type="term" value="P:thiamine diphosphate biosynthetic process"/>
    <property type="evidence" value="ECO:0007669"/>
    <property type="project" value="UniProtKB-UniRule"/>
</dbReference>
<dbReference type="GO" id="GO:0052837">
    <property type="term" value="P:thiazole biosynthetic process"/>
    <property type="evidence" value="ECO:0007669"/>
    <property type="project" value="InterPro"/>
</dbReference>
<dbReference type="GO" id="GO:0002937">
    <property type="term" value="P:tRNA 4-thiouridine biosynthesis"/>
    <property type="evidence" value="ECO:0007669"/>
    <property type="project" value="TreeGrafter"/>
</dbReference>
<dbReference type="CDD" id="cd01712">
    <property type="entry name" value="PPase_ThiI"/>
    <property type="match status" value="1"/>
</dbReference>
<dbReference type="CDD" id="cd00158">
    <property type="entry name" value="RHOD"/>
    <property type="match status" value="1"/>
</dbReference>
<dbReference type="CDD" id="cd11716">
    <property type="entry name" value="THUMP_ThiI"/>
    <property type="match status" value="1"/>
</dbReference>
<dbReference type="Gene3D" id="3.30.2130.30">
    <property type="match status" value="1"/>
</dbReference>
<dbReference type="Gene3D" id="3.40.50.620">
    <property type="entry name" value="HUPs"/>
    <property type="match status" value="1"/>
</dbReference>
<dbReference type="Gene3D" id="3.40.250.10">
    <property type="entry name" value="Rhodanese-like domain"/>
    <property type="match status" value="1"/>
</dbReference>
<dbReference type="HAMAP" id="MF_00021">
    <property type="entry name" value="ThiI"/>
    <property type="match status" value="1"/>
</dbReference>
<dbReference type="InterPro" id="IPR001763">
    <property type="entry name" value="Rhodanese-like_dom"/>
</dbReference>
<dbReference type="InterPro" id="IPR036873">
    <property type="entry name" value="Rhodanese-like_dom_sf"/>
</dbReference>
<dbReference type="InterPro" id="IPR014729">
    <property type="entry name" value="Rossmann-like_a/b/a_fold"/>
</dbReference>
<dbReference type="InterPro" id="IPR020536">
    <property type="entry name" value="ThiI_AANH"/>
</dbReference>
<dbReference type="InterPro" id="IPR054173">
    <property type="entry name" value="ThiI_fer"/>
</dbReference>
<dbReference type="InterPro" id="IPR049961">
    <property type="entry name" value="ThiI_N"/>
</dbReference>
<dbReference type="InterPro" id="IPR026340">
    <property type="entry name" value="THII_Thiazole_biosynth_dom"/>
</dbReference>
<dbReference type="InterPro" id="IPR004114">
    <property type="entry name" value="THUMP_dom"/>
</dbReference>
<dbReference type="InterPro" id="IPR049962">
    <property type="entry name" value="THUMP_ThiI"/>
</dbReference>
<dbReference type="InterPro" id="IPR003720">
    <property type="entry name" value="tRNA_STrfase"/>
</dbReference>
<dbReference type="InterPro" id="IPR050102">
    <property type="entry name" value="tRNA_sulfurtransferase_ThiI"/>
</dbReference>
<dbReference type="NCBIfam" id="TIGR04271">
    <property type="entry name" value="ThiI_C_thiazole"/>
    <property type="match status" value="1"/>
</dbReference>
<dbReference type="NCBIfam" id="TIGR00342">
    <property type="entry name" value="tRNA uracil 4-sulfurtransferase ThiI"/>
    <property type="match status" value="1"/>
</dbReference>
<dbReference type="PANTHER" id="PTHR43209">
    <property type="entry name" value="TRNA SULFURTRANSFERASE"/>
    <property type="match status" value="1"/>
</dbReference>
<dbReference type="PANTHER" id="PTHR43209:SF1">
    <property type="entry name" value="TRNA SULFURTRANSFERASE"/>
    <property type="match status" value="1"/>
</dbReference>
<dbReference type="Pfam" id="PF00581">
    <property type="entry name" value="Rhodanese"/>
    <property type="match status" value="1"/>
</dbReference>
<dbReference type="Pfam" id="PF02568">
    <property type="entry name" value="ThiI"/>
    <property type="match status" value="1"/>
</dbReference>
<dbReference type="Pfam" id="PF22025">
    <property type="entry name" value="ThiI_fer"/>
    <property type="match status" value="1"/>
</dbReference>
<dbReference type="Pfam" id="PF02926">
    <property type="entry name" value="THUMP"/>
    <property type="match status" value="1"/>
</dbReference>
<dbReference type="SMART" id="SM00981">
    <property type="entry name" value="THUMP"/>
    <property type="match status" value="1"/>
</dbReference>
<dbReference type="SUPFAM" id="SSF52402">
    <property type="entry name" value="Adenine nucleotide alpha hydrolases-like"/>
    <property type="match status" value="1"/>
</dbReference>
<dbReference type="SUPFAM" id="SSF52821">
    <property type="entry name" value="Rhodanese/Cell cycle control phosphatase"/>
    <property type="match status" value="1"/>
</dbReference>
<dbReference type="SUPFAM" id="SSF143437">
    <property type="entry name" value="THUMP domain-like"/>
    <property type="match status" value="1"/>
</dbReference>
<dbReference type="PROSITE" id="PS50206">
    <property type="entry name" value="RHODANESE_3"/>
    <property type="match status" value="1"/>
</dbReference>
<dbReference type="PROSITE" id="PS51165">
    <property type="entry name" value="THUMP"/>
    <property type="match status" value="1"/>
</dbReference>
<organism>
    <name type="scientific">Azotobacter vinelandii (strain DJ / ATCC BAA-1303)</name>
    <dbReference type="NCBI Taxonomy" id="322710"/>
    <lineage>
        <taxon>Bacteria</taxon>
        <taxon>Pseudomonadati</taxon>
        <taxon>Pseudomonadota</taxon>
        <taxon>Gammaproteobacteria</taxon>
        <taxon>Pseudomonadales</taxon>
        <taxon>Pseudomonadaceae</taxon>
        <taxon>Azotobacter</taxon>
    </lineage>
</organism>
<gene>
    <name evidence="1" type="primary">thiI</name>
    <name type="ordered locus">Avin_45840</name>
</gene>
<keyword id="KW-0067">ATP-binding</keyword>
<keyword id="KW-0963">Cytoplasm</keyword>
<keyword id="KW-1015">Disulfide bond</keyword>
<keyword id="KW-0547">Nucleotide-binding</keyword>
<keyword id="KW-0676">Redox-active center</keyword>
<keyword id="KW-0694">RNA-binding</keyword>
<keyword id="KW-0784">Thiamine biosynthesis</keyword>
<keyword id="KW-0808">Transferase</keyword>
<keyword id="KW-0820">tRNA-binding</keyword>
<reference key="1">
    <citation type="journal article" date="2009" name="J. Bacteriol.">
        <title>Genome sequence of Azotobacter vinelandii, an obligate aerobe specialized to support diverse anaerobic metabolic processes.</title>
        <authorList>
            <person name="Setubal J.C."/>
            <person name="Dos Santos P."/>
            <person name="Goldman B.S."/>
            <person name="Ertesvaag H."/>
            <person name="Espin G."/>
            <person name="Rubio L.M."/>
            <person name="Valla S."/>
            <person name="Almeida N.F."/>
            <person name="Balasubramanian D."/>
            <person name="Cromes L."/>
            <person name="Curatti L."/>
            <person name="Du Z."/>
            <person name="Godsy E."/>
            <person name="Goodner B."/>
            <person name="Hellner-Burris K."/>
            <person name="Hernandez J.A."/>
            <person name="Houmiel K."/>
            <person name="Imperial J."/>
            <person name="Kennedy C."/>
            <person name="Larson T.J."/>
            <person name="Latreille P."/>
            <person name="Ligon L.S."/>
            <person name="Lu J."/>
            <person name="Maerk M."/>
            <person name="Miller N.M."/>
            <person name="Norton S."/>
            <person name="O'Carroll I.P."/>
            <person name="Paulsen I."/>
            <person name="Raulfs E.C."/>
            <person name="Roemer R."/>
            <person name="Rosser J."/>
            <person name="Segura D."/>
            <person name="Slater S."/>
            <person name="Stricklin S.L."/>
            <person name="Studholme D.J."/>
            <person name="Sun J."/>
            <person name="Viana C.J."/>
            <person name="Wallin E."/>
            <person name="Wang B."/>
            <person name="Wheeler C."/>
            <person name="Zhu H."/>
            <person name="Dean D.R."/>
            <person name="Dixon R."/>
            <person name="Wood D."/>
        </authorList>
    </citation>
    <scope>NUCLEOTIDE SEQUENCE [LARGE SCALE GENOMIC DNA]</scope>
    <source>
        <strain>DJ / ATCC BAA-1303</strain>
    </source>
</reference>
<accession>C1DHW2</accession>
<comment type="function">
    <text evidence="1">Catalyzes the ATP-dependent transfer of a sulfur to tRNA to produce 4-thiouridine in position 8 of tRNAs, which functions as a near-UV photosensor. Also catalyzes the transfer of sulfur to the sulfur carrier protein ThiS, forming ThiS-thiocarboxylate. This is a step in the synthesis of thiazole, in the thiamine biosynthesis pathway. The sulfur is donated as persulfide by IscS.</text>
</comment>
<comment type="catalytic activity">
    <reaction evidence="1">
        <text>[ThiI sulfur-carrier protein]-S-sulfanyl-L-cysteine + a uridine in tRNA + 2 reduced [2Fe-2S]-[ferredoxin] + ATP + H(+) = [ThiI sulfur-carrier protein]-L-cysteine + a 4-thiouridine in tRNA + 2 oxidized [2Fe-2S]-[ferredoxin] + AMP + diphosphate</text>
        <dbReference type="Rhea" id="RHEA:24176"/>
        <dbReference type="Rhea" id="RHEA-COMP:10000"/>
        <dbReference type="Rhea" id="RHEA-COMP:10001"/>
        <dbReference type="Rhea" id="RHEA-COMP:13337"/>
        <dbReference type="Rhea" id="RHEA-COMP:13338"/>
        <dbReference type="Rhea" id="RHEA-COMP:13339"/>
        <dbReference type="Rhea" id="RHEA-COMP:13340"/>
        <dbReference type="ChEBI" id="CHEBI:15378"/>
        <dbReference type="ChEBI" id="CHEBI:29950"/>
        <dbReference type="ChEBI" id="CHEBI:30616"/>
        <dbReference type="ChEBI" id="CHEBI:33019"/>
        <dbReference type="ChEBI" id="CHEBI:33737"/>
        <dbReference type="ChEBI" id="CHEBI:33738"/>
        <dbReference type="ChEBI" id="CHEBI:61963"/>
        <dbReference type="ChEBI" id="CHEBI:65315"/>
        <dbReference type="ChEBI" id="CHEBI:136798"/>
        <dbReference type="ChEBI" id="CHEBI:456215"/>
        <dbReference type="EC" id="2.8.1.4"/>
    </reaction>
</comment>
<comment type="catalytic activity">
    <reaction evidence="1">
        <text>[ThiS sulfur-carrier protein]-C-terminal Gly-Gly-AMP + S-sulfanyl-L-cysteinyl-[cysteine desulfurase] + AH2 = [ThiS sulfur-carrier protein]-C-terminal-Gly-aminoethanethioate + L-cysteinyl-[cysteine desulfurase] + A + AMP + 2 H(+)</text>
        <dbReference type="Rhea" id="RHEA:43340"/>
        <dbReference type="Rhea" id="RHEA-COMP:12157"/>
        <dbReference type="Rhea" id="RHEA-COMP:12158"/>
        <dbReference type="Rhea" id="RHEA-COMP:12910"/>
        <dbReference type="Rhea" id="RHEA-COMP:19908"/>
        <dbReference type="ChEBI" id="CHEBI:13193"/>
        <dbReference type="ChEBI" id="CHEBI:15378"/>
        <dbReference type="ChEBI" id="CHEBI:17499"/>
        <dbReference type="ChEBI" id="CHEBI:29950"/>
        <dbReference type="ChEBI" id="CHEBI:61963"/>
        <dbReference type="ChEBI" id="CHEBI:90618"/>
        <dbReference type="ChEBI" id="CHEBI:232372"/>
        <dbReference type="ChEBI" id="CHEBI:456215"/>
    </reaction>
</comment>
<comment type="pathway">
    <text evidence="1">Cofactor biosynthesis; thiamine diphosphate biosynthesis.</text>
</comment>
<comment type="subcellular location">
    <subcellularLocation>
        <location evidence="1">Cytoplasm</location>
    </subcellularLocation>
</comment>
<comment type="similarity">
    <text evidence="1">Belongs to the ThiI family.</text>
</comment>
<feature type="chain" id="PRO_1000201910" description="tRNA sulfurtransferase">
    <location>
        <begin position="1"/>
        <end position="484"/>
    </location>
</feature>
<feature type="domain" description="THUMP" evidence="1">
    <location>
        <begin position="63"/>
        <end position="167"/>
    </location>
</feature>
<feature type="domain" description="Rhodanese" evidence="1">
    <location>
        <begin position="405"/>
        <end position="483"/>
    </location>
</feature>
<feature type="active site" description="Cysteine persulfide intermediate" evidence="1">
    <location>
        <position position="457"/>
    </location>
</feature>
<feature type="binding site" evidence="1">
    <location>
        <begin position="185"/>
        <end position="186"/>
    </location>
    <ligand>
        <name>ATP</name>
        <dbReference type="ChEBI" id="CHEBI:30616"/>
    </ligand>
</feature>
<feature type="binding site" evidence="1">
    <location>
        <position position="267"/>
    </location>
    <ligand>
        <name>ATP</name>
        <dbReference type="ChEBI" id="CHEBI:30616"/>
    </ligand>
</feature>
<feature type="binding site" evidence="1">
    <location>
        <position position="289"/>
    </location>
    <ligand>
        <name>ATP</name>
        <dbReference type="ChEBI" id="CHEBI:30616"/>
    </ligand>
</feature>
<feature type="binding site" evidence="1">
    <location>
        <position position="298"/>
    </location>
    <ligand>
        <name>ATP</name>
        <dbReference type="ChEBI" id="CHEBI:30616"/>
    </ligand>
</feature>
<feature type="disulfide bond" description="Redox-active" evidence="1">
    <location>
        <begin position="346"/>
        <end position="457"/>
    </location>
</feature>
<name>THII_AZOVD</name>
<proteinExistence type="inferred from homology"/>
<evidence type="ECO:0000255" key="1">
    <source>
        <dbReference type="HAMAP-Rule" id="MF_00021"/>
    </source>
</evidence>
<protein>
    <recommendedName>
        <fullName evidence="1">tRNA sulfurtransferase</fullName>
        <ecNumber evidence="1">2.8.1.4</ecNumber>
    </recommendedName>
    <alternativeName>
        <fullName evidence="1">Sulfur carrier protein ThiS sulfurtransferase</fullName>
    </alternativeName>
    <alternativeName>
        <fullName evidence="1">Thiamine biosynthesis protein ThiI</fullName>
    </alternativeName>
    <alternativeName>
        <fullName evidence="1">tRNA 4-thiouridine synthase</fullName>
    </alternativeName>
</protein>